<keyword id="KW-0028">Amino-acid biosynthesis</keyword>
<keyword id="KW-0057">Aromatic amino acid biosynthesis</keyword>
<keyword id="KW-0521">NADP</keyword>
<keyword id="KW-0560">Oxidoreductase</keyword>
<keyword id="KW-1185">Reference proteome</keyword>
<proteinExistence type="inferred from homology"/>
<comment type="function">
    <text evidence="1">Involved in the biosynthesis of the chorismate, which leads to the biosynthesis of aromatic amino acids. Catalyzes the reversible NADPH linked reduction of 3-dehydroshikimate (DHSA) to yield shikimate (SA).</text>
</comment>
<comment type="catalytic activity">
    <reaction evidence="1">
        <text>shikimate + NADP(+) = 3-dehydroshikimate + NADPH + H(+)</text>
        <dbReference type="Rhea" id="RHEA:17737"/>
        <dbReference type="ChEBI" id="CHEBI:15378"/>
        <dbReference type="ChEBI" id="CHEBI:16630"/>
        <dbReference type="ChEBI" id="CHEBI:36208"/>
        <dbReference type="ChEBI" id="CHEBI:57783"/>
        <dbReference type="ChEBI" id="CHEBI:58349"/>
        <dbReference type="EC" id="1.1.1.25"/>
    </reaction>
</comment>
<comment type="pathway">
    <text evidence="1">Metabolic intermediate biosynthesis; chorismate biosynthesis; chorismate from D-erythrose 4-phosphate and phosphoenolpyruvate: step 4/7.</text>
</comment>
<comment type="subunit">
    <text evidence="1">Homodimer.</text>
</comment>
<comment type="similarity">
    <text evidence="1">Belongs to the shikimate dehydrogenase family.</text>
</comment>
<sequence>MNQYAVWGNPIAQSKSPRIHQLFGEQTGKSISYVAKLGNELNFENELMQFFAEGAKGANITAPFKERAFSLADEYSESCLLAEACNTLKRLDDGRLYADNTDGFGLCSDLERLGWLKPHQRVLILGAGGATKGVLFPLLKAKQQITIYNRTLEKAVRLAEKFAKYGKIRTASLEQIAEQQFDLIINATSLGLQGKYVPVAAHLLKSAAVYDMQYAPDMQTPFLNYARECGAVRYQDGLGMLVGQAGFAFKLWENEFPNVEKVLKQLKNEMENAK</sequence>
<accession>A3N1E3</accession>
<feature type="chain" id="PRO_0000325094" description="Shikimate dehydrogenase (NADP(+))">
    <location>
        <begin position="1"/>
        <end position="274"/>
    </location>
</feature>
<feature type="active site" description="Proton acceptor" evidence="1">
    <location>
        <position position="65"/>
    </location>
</feature>
<feature type="binding site" evidence="1">
    <location>
        <begin position="14"/>
        <end position="16"/>
    </location>
    <ligand>
        <name>shikimate</name>
        <dbReference type="ChEBI" id="CHEBI:36208"/>
    </ligand>
</feature>
<feature type="binding site" evidence="1">
    <location>
        <position position="61"/>
    </location>
    <ligand>
        <name>shikimate</name>
        <dbReference type="ChEBI" id="CHEBI:36208"/>
    </ligand>
</feature>
<feature type="binding site" evidence="1">
    <location>
        <position position="77"/>
    </location>
    <ligand>
        <name>NADP(+)</name>
        <dbReference type="ChEBI" id="CHEBI:58349"/>
    </ligand>
</feature>
<feature type="binding site" evidence="1">
    <location>
        <position position="86"/>
    </location>
    <ligand>
        <name>shikimate</name>
        <dbReference type="ChEBI" id="CHEBI:36208"/>
    </ligand>
</feature>
<feature type="binding site" evidence="1">
    <location>
        <position position="102"/>
    </location>
    <ligand>
        <name>shikimate</name>
        <dbReference type="ChEBI" id="CHEBI:36208"/>
    </ligand>
</feature>
<feature type="binding site" evidence="1">
    <location>
        <begin position="126"/>
        <end position="130"/>
    </location>
    <ligand>
        <name>NADP(+)</name>
        <dbReference type="ChEBI" id="CHEBI:58349"/>
    </ligand>
</feature>
<feature type="binding site" evidence="1">
    <location>
        <begin position="149"/>
        <end position="154"/>
    </location>
    <ligand>
        <name>NADP(+)</name>
        <dbReference type="ChEBI" id="CHEBI:58349"/>
    </ligand>
</feature>
<feature type="binding site" evidence="1">
    <location>
        <position position="212"/>
    </location>
    <ligand>
        <name>NADP(+)</name>
        <dbReference type="ChEBI" id="CHEBI:58349"/>
    </ligand>
</feature>
<feature type="binding site" evidence="1">
    <location>
        <position position="214"/>
    </location>
    <ligand>
        <name>shikimate</name>
        <dbReference type="ChEBI" id="CHEBI:36208"/>
    </ligand>
</feature>
<feature type="binding site" evidence="1">
    <location>
        <position position="237"/>
    </location>
    <ligand>
        <name>NADP(+)</name>
        <dbReference type="ChEBI" id="CHEBI:58349"/>
    </ligand>
</feature>
<name>AROE_ACTP2</name>
<protein>
    <recommendedName>
        <fullName evidence="1">Shikimate dehydrogenase (NADP(+))</fullName>
        <shortName evidence="1">SDH</shortName>
        <ecNumber evidence="1">1.1.1.25</ecNumber>
    </recommendedName>
</protein>
<dbReference type="EC" id="1.1.1.25" evidence="1"/>
<dbReference type="EMBL" id="CP000569">
    <property type="protein sequence ID" value="ABN74229.1"/>
    <property type="molecule type" value="Genomic_DNA"/>
</dbReference>
<dbReference type="RefSeq" id="WP_005601621.1">
    <property type="nucleotide sequence ID" value="NC_009053.1"/>
</dbReference>
<dbReference type="SMR" id="A3N1E3"/>
<dbReference type="STRING" id="416269.APL_1139"/>
<dbReference type="EnsemblBacteria" id="ABN74229">
    <property type="protein sequence ID" value="ABN74229"/>
    <property type="gene ID" value="APL_1139"/>
</dbReference>
<dbReference type="KEGG" id="apl:APL_1139"/>
<dbReference type="eggNOG" id="COG0169">
    <property type="taxonomic scope" value="Bacteria"/>
</dbReference>
<dbReference type="HOGENOM" id="CLU_044063_2_1_6"/>
<dbReference type="UniPathway" id="UPA00053">
    <property type="reaction ID" value="UER00087"/>
</dbReference>
<dbReference type="Proteomes" id="UP000001432">
    <property type="component" value="Chromosome"/>
</dbReference>
<dbReference type="GO" id="GO:0005829">
    <property type="term" value="C:cytosol"/>
    <property type="evidence" value="ECO:0007669"/>
    <property type="project" value="TreeGrafter"/>
</dbReference>
<dbReference type="GO" id="GO:0050661">
    <property type="term" value="F:NADP binding"/>
    <property type="evidence" value="ECO:0007669"/>
    <property type="project" value="InterPro"/>
</dbReference>
<dbReference type="GO" id="GO:0004764">
    <property type="term" value="F:shikimate 3-dehydrogenase (NADP+) activity"/>
    <property type="evidence" value="ECO:0007669"/>
    <property type="project" value="UniProtKB-UniRule"/>
</dbReference>
<dbReference type="GO" id="GO:0008652">
    <property type="term" value="P:amino acid biosynthetic process"/>
    <property type="evidence" value="ECO:0007669"/>
    <property type="project" value="UniProtKB-KW"/>
</dbReference>
<dbReference type="GO" id="GO:0009073">
    <property type="term" value="P:aromatic amino acid family biosynthetic process"/>
    <property type="evidence" value="ECO:0007669"/>
    <property type="project" value="UniProtKB-KW"/>
</dbReference>
<dbReference type="GO" id="GO:0009423">
    <property type="term" value="P:chorismate biosynthetic process"/>
    <property type="evidence" value="ECO:0007669"/>
    <property type="project" value="UniProtKB-UniRule"/>
</dbReference>
<dbReference type="GO" id="GO:0019632">
    <property type="term" value="P:shikimate metabolic process"/>
    <property type="evidence" value="ECO:0007669"/>
    <property type="project" value="InterPro"/>
</dbReference>
<dbReference type="CDD" id="cd01065">
    <property type="entry name" value="NAD_bind_Shikimate_DH"/>
    <property type="match status" value="1"/>
</dbReference>
<dbReference type="FunFam" id="3.40.50.10860:FF:000006">
    <property type="entry name" value="Shikimate dehydrogenase (NADP(+))"/>
    <property type="match status" value="1"/>
</dbReference>
<dbReference type="Gene3D" id="3.40.50.10860">
    <property type="entry name" value="Leucine Dehydrogenase, chain A, domain 1"/>
    <property type="match status" value="1"/>
</dbReference>
<dbReference type="Gene3D" id="3.40.50.720">
    <property type="entry name" value="NAD(P)-binding Rossmann-like Domain"/>
    <property type="match status" value="1"/>
</dbReference>
<dbReference type="HAMAP" id="MF_00222">
    <property type="entry name" value="Shikimate_DH_AroE"/>
    <property type="match status" value="1"/>
</dbReference>
<dbReference type="InterPro" id="IPR046346">
    <property type="entry name" value="Aminoacid_DH-like_N_sf"/>
</dbReference>
<dbReference type="InterPro" id="IPR036291">
    <property type="entry name" value="NAD(P)-bd_dom_sf"/>
</dbReference>
<dbReference type="InterPro" id="IPR011342">
    <property type="entry name" value="Shikimate_DH"/>
</dbReference>
<dbReference type="InterPro" id="IPR013708">
    <property type="entry name" value="Shikimate_DH-bd_N"/>
</dbReference>
<dbReference type="InterPro" id="IPR022893">
    <property type="entry name" value="Shikimate_DH_fam"/>
</dbReference>
<dbReference type="InterPro" id="IPR006151">
    <property type="entry name" value="Shikm_DH/Glu-tRNA_Rdtase"/>
</dbReference>
<dbReference type="NCBIfam" id="TIGR00507">
    <property type="entry name" value="aroE"/>
    <property type="match status" value="1"/>
</dbReference>
<dbReference type="NCBIfam" id="NF001310">
    <property type="entry name" value="PRK00258.1-2"/>
    <property type="match status" value="1"/>
</dbReference>
<dbReference type="PANTHER" id="PTHR21089:SF1">
    <property type="entry name" value="BIFUNCTIONAL 3-DEHYDROQUINATE DEHYDRATASE_SHIKIMATE DEHYDROGENASE, CHLOROPLASTIC"/>
    <property type="match status" value="1"/>
</dbReference>
<dbReference type="PANTHER" id="PTHR21089">
    <property type="entry name" value="SHIKIMATE DEHYDROGENASE"/>
    <property type="match status" value="1"/>
</dbReference>
<dbReference type="Pfam" id="PF01488">
    <property type="entry name" value="Shikimate_DH"/>
    <property type="match status" value="1"/>
</dbReference>
<dbReference type="Pfam" id="PF08501">
    <property type="entry name" value="Shikimate_dh_N"/>
    <property type="match status" value="1"/>
</dbReference>
<dbReference type="SUPFAM" id="SSF53223">
    <property type="entry name" value="Aminoacid dehydrogenase-like, N-terminal domain"/>
    <property type="match status" value="1"/>
</dbReference>
<dbReference type="SUPFAM" id="SSF51735">
    <property type="entry name" value="NAD(P)-binding Rossmann-fold domains"/>
    <property type="match status" value="1"/>
</dbReference>
<gene>
    <name evidence="1" type="primary">aroE</name>
    <name type="ordered locus">APL_1139</name>
</gene>
<evidence type="ECO:0000255" key="1">
    <source>
        <dbReference type="HAMAP-Rule" id="MF_00222"/>
    </source>
</evidence>
<reference key="1">
    <citation type="journal article" date="2008" name="J. Bacteriol.">
        <title>The complete genome sequence of Actinobacillus pleuropneumoniae L20 (serotype 5b).</title>
        <authorList>
            <person name="Foote S.J."/>
            <person name="Bosse J.T."/>
            <person name="Bouevitch A.B."/>
            <person name="Langford P.R."/>
            <person name="Young N.M."/>
            <person name="Nash J.H.E."/>
        </authorList>
    </citation>
    <scope>NUCLEOTIDE SEQUENCE [LARGE SCALE GENOMIC DNA]</scope>
    <source>
        <strain>L20</strain>
    </source>
</reference>
<organism>
    <name type="scientific">Actinobacillus pleuropneumoniae serotype 5b (strain L20)</name>
    <dbReference type="NCBI Taxonomy" id="416269"/>
    <lineage>
        <taxon>Bacteria</taxon>
        <taxon>Pseudomonadati</taxon>
        <taxon>Pseudomonadota</taxon>
        <taxon>Gammaproteobacteria</taxon>
        <taxon>Pasteurellales</taxon>
        <taxon>Pasteurellaceae</taxon>
        <taxon>Actinobacillus</taxon>
    </lineage>
</organism>